<protein>
    <recommendedName>
        <fullName evidence="1">Phenylalanine--tRNA ligase alpha subunit</fullName>
        <ecNumber evidence="1">6.1.1.20</ecNumber>
    </recommendedName>
    <alternativeName>
        <fullName evidence="1">Phenylalanyl-tRNA synthetase alpha subunit</fullName>
        <shortName evidence="1">PheRS</shortName>
    </alternativeName>
</protein>
<evidence type="ECO:0000255" key="1">
    <source>
        <dbReference type="HAMAP-Rule" id="MF_00281"/>
    </source>
</evidence>
<name>SYFA_COXB1</name>
<comment type="catalytic activity">
    <reaction evidence="1">
        <text>tRNA(Phe) + L-phenylalanine + ATP = L-phenylalanyl-tRNA(Phe) + AMP + diphosphate + H(+)</text>
        <dbReference type="Rhea" id="RHEA:19413"/>
        <dbReference type="Rhea" id="RHEA-COMP:9668"/>
        <dbReference type="Rhea" id="RHEA-COMP:9699"/>
        <dbReference type="ChEBI" id="CHEBI:15378"/>
        <dbReference type="ChEBI" id="CHEBI:30616"/>
        <dbReference type="ChEBI" id="CHEBI:33019"/>
        <dbReference type="ChEBI" id="CHEBI:58095"/>
        <dbReference type="ChEBI" id="CHEBI:78442"/>
        <dbReference type="ChEBI" id="CHEBI:78531"/>
        <dbReference type="ChEBI" id="CHEBI:456215"/>
        <dbReference type="EC" id="6.1.1.20"/>
    </reaction>
</comment>
<comment type="cofactor">
    <cofactor evidence="1">
        <name>Mg(2+)</name>
        <dbReference type="ChEBI" id="CHEBI:18420"/>
    </cofactor>
    <text evidence="1">Binds 2 magnesium ions per tetramer.</text>
</comment>
<comment type="subunit">
    <text evidence="1">Tetramer of two alpha and two beta subunits.</text>
</comment>
<comment type="subcellular location">
    <subcellularLocation>
        <location evidence="1">Cytoplasm</location>
    </subcellularLocation>
</comment>
<comment type="similarity">
    <text evidence="1">Belongs to the class-II aminoacyl-tRNA synthetase family. Phe-tRNA synthetase alpha subunit type 1 subfamily.</text>
</comment>
<keyword id="KW-0030">Aminoacyl-tRNA synthetase</keyword>
<keyword id="KW-0067">ATP-binding</keyword>
<keyword id="KW-0963">Cytoplasm</keyword>
<keyword id="KW-0436">Ligase</keyword>
<keyword id="KW-0460">Magnesium</keyword>
<keyword id="KW-0479">Metal-binding</keyword>
<keyword id="KW-0547">Nucleotide-binding</keyword>
<keyword id="KW-0648">Protein biosynthesis</keyword>
<proteinExistence type="inferred from homology"/>
<organism>
    <name type="scientific">Coxiella burnetii (strain CbuK_Q154)</name>
    <name type="common">Coxiella burnetii (strain Q154)</name>
    <dbReference type="NCBI Taxonomy" id="434924"/>
    <lineage>
        <taxon>Bacteria</taxon>
        <taxon>Pseudomonadati</taxon>
        <taxon>Pseudomonadota</taxon>
        <taxon>Gammaproteobacteria</taxon>
        <taxon>Legionellales</taxon>
        <taxon>Coxiellaceae</taxon>
        <taxon>Coxiella</taxon>
    </lineage>
</organism>
<dbReference type="EC" id="6.1.1.20" evidence="1"/>
<dbReference type="EMBL" id="CP001020">
    <property type="protein sequence ID" value="ACJ20376.1"/>
    <property type="molecule type" value="Genomic_DNA"/>
</dbReference>
<dbReference type="RefSeq" id="WP_005770930.1">
    <property type="nucleotide sequence ID" value="NC_011528.1"/>
</dbReference>
<dbReference type="SMR" id="B6J7X7"/>
<dbReference type="KEGG" id="cbc:CbuK_1186"/>
<dbReference type="HOGENOM" id="CLU_025086_0_1_6"/>
<dbReference type="GO" id="GO:0005737">
    <property type="term" value="C:cytoplasm"/>
    <property type="evidence" value="ECO:0007669"/>
    <property type="project" value="UniProtKB-SubCell"/>
</dbReference>
<dbReference type="GO" id="GO:0005524">
    <property type="term" value="F:ATP binding"/>
    <property type="evidence" value="ECO:0007669"/>
    <property type="project" value="UniProtKB-UniRule"/>
</dbReference>
<dbReference type="GO" id="GO:0000287">
    <property type="term" value="F:magnesium ion binding"/>
    <property type="evidence" value="ECO:0007669"/>
    <property type="project" value="UniProtKB-UniRule"/>
</dbReference>
<dbReference type="GO" id="GO:0004826">
    <property type="term" value="F:phenylalanine-tRNA ligase activity"/>
    <property type="evidence" value="ECO:0007669"/>
    <property type="project" value="UniProtKB-UniRule"/>
</dbReference>
<dbReference type="GO" id="GO:0000049">
    <property type="term" value="F:tRNA binding"/>
    <property type="evidence" value="ECO:0007669"/>
    <property type="project" value="InterPro"/>
</dbReference>
<dbReference type="GO" id="GO:0006432">
    <property type="term" value="P:phenylalanyl-tRNA aminoacylation"/>
    <property type="evidence" value="ECO:0007669"/>
    <property type="project" value="UniProtKB-UniRule"/>
</dbReference>
<dbReference type="CDD" id="cd00496">
    <property type="entry name" value="PheRS_alpha_core"/>
    <property type="match status" value="1"/>
</dbReference>
<dbReference type="FunFam" id="3.30.930.10:FF:000003">
    <property type="entry name" value="Phenylalanine--tRNA ligase alpha subunit"/>
    <property type="match status" value="1"/>
</dbReference>
<dbReference type="Gene3D" id="3.30.930.10">
    <property type="entry name" value="Bira Bifunctional Protein, Domain 2"/>
    <property type="match status" value="1"/>
</dbReference>
<dbReference type="HAMAP" id="MF_00281">
    <property type="entry name" value="Phe_tRNA_synth_alpha1"/>
    <property type="match status" value="1"/>
</dbReference>
<dbReference type="InterPro" id="IPR006195">
    <property type="entry name" value="aa-tRNA-synth_II"/>
</dbReference>
<dbReference type="InterPro" id="IPR045864">
    <property type="entry name" value="aa-tRNA-synth_II/BPL/LPL"/>
</dbReference>
<dbReference type="InterPro" id="IPR004529">
    <property type="entry name" value="Phe-tRNA-synth_IIc_asu"/>
</dbReference>
<dbReference type="InterPro" id="IPR004188">
    <property type="entry name" value="Phe-tRNA_ligase_II_N"/>
</dbReference>
<dbReference type="InterPro" id="IPR022911">
    <property type="entry name" value="Phe_tRNA_ligase_alpha1_bac"/>
</dbReference>
<dbReference type="InterPro" id="IPR002319">
    <property type="entry name" value="Phenylalanyl-tRNA_Synthase"/>
</dbReference>
<dbReference type="InterPro" id="IPR010978">
    <property type="entry name" value="tRNA-bd_arm"/>
</dbReference>
<dbReference type="NCBIfam" id="TIGR00468">
    <property type="entry name" value="pheS"/>
    <property type="match status" value="1"/>
</dbReference>
<dbReference type="PANTHER" id="PTHR11538:SF41">
    <property type="entry name" value="PHENYLALANINE--TRNA LIGASE, MITOCHONDRIAL"/>
    <property type="match status" value="1"/>
</dbReference>
<dbReference type="PANTHER" id="PTHR11538">
    <property type="entry name" value="PHENYLALANYL-TRNA SYNTHETASE"/>
    <property type="match status" value="1"/>
</dbReference>
<dbReference type="Pfam" id="PF02912">
    <property type="entry name" value="Phe_tRNA-synt_N"/>
    <property type="match status" value="1"/>
</dbReference>
<dbReference type="Pfam" id="PF01409">
    <property type="entry name" value="tRNA-synt_2d"/>
    <property type="match status" value="1"/>
</dbReference>
<dbReference type="SUPFAM" id="SSF55681">
    <property type="entry name" value="Class II aaRS and biotin synthetases"/>
    <property type="match status" value="1"/>
</dbReference>
<dbReference type="SUPFAM" id="SSF46589">
    <property type="entry name" value="tRNA-binding arm"/>
    <property type="match status" value="1"/>
</dbReference>
<dbReference type="PROSITE" id="PS50862">
    <property type="entry name" value="AA_TRNA_LIGASE_II"/>
    <property type="match status" value="1"/>
</dbReference>
<feature type="chain" id="PRO_1000114862" description="Phenylalanine--tRNA ligase alpha subunit">
    <location>
        <begin position="1"/>
        <end position="329"/>
    </location>
</feature>
<feature type="binding site" evidence="1">
    <location>
        <position position="253"/>
    </location>
    <ligand>
        <name>Mg(2+)</name>
        <dbReference type="ChEBI" id="CHEBI:18420"/>
        <note>shared with beta subunit</note>
    </ligand>
</feature>
<accession>B6J7X7</accession>
<reference key="1">
    <citation type="journal article" date="2009" name="Infect. Immun.">
        <title>Comparative genomics reveal extensive transposon-mediated genomic plasticity and diversity among potential effector proteins within the genus Coxiella.</title>
        <authorList>
            <person name="Beare P.A."/>
            <person name="Unsworth N."/>
            <person name="Andoh M."/>
            <person name="Voth D.E."/>
            <person name="Omsland A."/>
            <person name="Gilk S.D."/>
            <person name="Williams K.P."/>
            <person name="Sobral B.W."/>
            <person name="Kupko J.J. III"/>
            <person name="Porcella S.F."/>
            <person name="Samuel J.E."/>
            <person name="Heinzen R.A."/>
        </authorList>
    </citation>
    <scope>NUCLEOTIDE SEQUENCE [LARGE SCALE GENOMIC DNA]</scope>
    <source>
        <strain>CbuK_Q154</strain>
    </source>
</reference>
<sequence length="329" mass="37979">MQNQLNALLQSAKKSVADAQSEIVLEEIRVDYLGKKGKLTELLKSVGQMPADQRPLLGKAVNEIKREIQQLLNAKSTQLREKSLQEKLNKEKVDITLRGRYDHLGAIHPISRVSERVSQLFSMLGFQIAEGPEIENEYYNFEALNIPADHPARTMADTFYFSGDKLLRTHTSPVQIREMEKQGVPIRLIALGRVYRRDLDQTHTPMFHQVEGLVIDKRSTFANLKGLLQQFLNCFFEKDVRLRFRPSYFPFTEPSAEVDIYQPRTDKWLEVLGCGMVHPNVLRNLNIDPDEYSGFAFGIGLDRLAMLRYEVTDLRLFFENDLRFLGQFK</sequence>
<gene>
    <name evidence="1" type="primary">pheS</name>
    <name type="ordered locus">CbuK_1186</name>
</gene>